<reference key="1">
    <citation type="journal article" date="2009" name="PLoS Pathog.">
        <title>Genomic evidence for the evolution of Streptococcus equi: host restriction, increased virulence, and genetic exchange with human pathogens.</title>
        <authorList>
            <person name="Holden M.T.G."/>
            <person name="Heather Z."/>
            <person name="Paillot R."/>
            <person name="Steward K.F."/>
            <person name="Webb K."/>
            <person name="Ainslie F."/>
            <person name="Jourdan T."/>
            <person name="Bason N.C."/>
            <person name="Holroyd N.E."/>
            <person name="Mungall K."/>
            <person name="Quail M.A."/>
            <person name="Sanders M."/>
            <person name="Simmonds M."/>
            <person name="Willey D."/>
            <person name="Brooks K."/>
            <person name="Aanensen D.M."/>
            <person name="Spratt B.G."/>
            <person name="Jolley K.A."/>
            <person name="Maiden M.C.J."/>
            <person name="Kehoe M."/>
            <person name="Chanter N."/>
            <person name="Bentley S.D."/>
            <person name="Robinson C."/>
            <person name="Maskell D.J."/>
            <person name="Parkhill J."/>
            <person name="Waller A.S."/>
        </authorList>
    </citation>
    <scope>NUCLEOTIDE SEQUENCE [LARGE SCALE GENOMIC DNA]</scope>
    <source>
        <strain>H70</strain>
    </source>
</reference>
<gene>
    <name evidence="1" type="primary">uxaC</name>
    <name type="ordered locus">SZO_13120</name>
</gene>
<organism>
    <name type="scientific">Streptococcus equi subsp. zooepidemicus (strain H70)</name>
    <dbReference type="NCBI Taxonomy" id="553483"/>
    <lineage>
        <taxon>Bacteria</taxon>
        <taxon>Bacillati</taxon>
        <taxon>Bacillota</taxon>
        <taxon>Bacilli</taxon>
        <taxon>Lactobacillales</taxon>
        <taxon>Streptococcaceae</taxon>
        <taxon>Streptococcus</taxon>
    </lineage>
</organism>
<name>UXAC_STRS7</name>
<keyword id="KW-0413">Isomerase</keyword>
<evidence type="ECO:0000255" key="1">
    <source>
        <dbReference type="HAMAP-Rule" id="MF_00675"/>
    </source>
</evidence>
<protein>
    <recommendedName>
        <fullName evidence="1">Uronate isomerase</fullName>
        <ecNumber evidence="1">5.3.1.12</ecNumber>
    </recommendedName>
    <alternativeName>
        <fullName evidence="1">Glucuronate isomerase</fullName>
    </alternativeName>
    <alternativeName>
        <fullName evidence="1">Uronic isomerase</fullName>
    </alternativeName>
</protein>
<dbReference type="EC" id="5.3.1.12" evidence="1"/>
<dbReference type="EMBL" id="FM204884">
    <property type="protein sequence ID" value="CAW99848.1"/>
    <property type="molecule type" value="Genomic_DNA"/>
</dbReference>
<dbReference type="SMR" id="C0MCL4"/>
<dbReference type="KEGG" id="seq:SZO_13120"/>
<dbReference type="PATRIC" id="fig|40041.11.peg.1390"/>
<dbReference type="eggNOG" id="COG1904">
    <property type="taxonomic scope" value="Bacteria"/>
</dbReference>
<dbReference type="HOGENOM" id="CLU_044465_1_0_9"/>
<dbReference type="UniPathway" id="UPA00246"/>
<dbReference type="Proteomes" id="UP000001368">
    <property type="component" value="Chromosome"/>
</dbReference>
<dbReference type="GO" id="GO:0008880">
    <property type="term" value="F:glucuronate isomerase activity"/>
    <property type="evidence" value="ECO:0007669"/>
    <property type="project" value="UniProtKB-UniRule"/>
</dbReference>
<dbReference type="GO" id="GO:0019698">
    <property type="term" value="P:D-galacturonate catabolic process"/>
    <property type="evidence" value="ECO:0007669"/>
    <property type="project" value="TreeGrafter"/>
</dbReference>
<dbReference type="GO" id="GO:0042840">
    <property type="term" value="P:D-glucuronate catabolic process"/>
    <property type="evidence" value="ECO:0007669"/>
    <property type="project" value="TreeGrafter"/>
</dbReference>
<dbReference type="Gene3D" id="3.20.20.140">
    <property type="entry name" value="Metal-dependent hydrolases"/>
    <property type="match status" value="1"/>
</dbReference>
<dbReference type="Gene3D" id="1.10.2020.10">
    <property type="entry name" value="uronate isomerase, domain 2, chain A"/>
    <property type="match status" value="1"/>
</dbReference>
<dbReference type="HAMAP" id="MF_00675">
    <property type="entry name" value="UxaC"/>
    <property type="match status" value="1"/>
</dbReference>
<dbReference type="InterPro" id="IPR032466">
    <property type="entry name" value="Metal_Hydrolase"/>
</dbReference>
<dbReference type="InterPro" id="IPR003766">
    <property type="entry name" value="Uronate_isomerase"/>
</dbReference>
<dbReference type="NCBIfam" id="NF002794">
    <property type="entry name" value="PRK02925.1"/>
    <property type="match status" value="1"/>
</dbReference>
<dbReference type="PANTHER" id="PTHR30068">
    <property type="entry name" value="URONATE ISOMERASE"/>
    <property type="match status" value="1"/>
</dbReference>
<dbReference type="PANTHER" id="PTHR30068:SF4">
    <property type="entry name" value="URONATE ISOMERASE"/>
    <property type="match status" value="1"/>
</dbReference>
<dbReference type="Pfam" id="PF02614">
    <property type="entry name" value="UxaC"/>
    <property type="match status" value="1"/>
</dbReference>
<dbReference type="SUPFAM" id="SSF51556">
    <property type="entry name" value="Metallo-dependent hydrolases"/>
    <property type="match status" value="1"/>
</dbReference>
<accession>C0MCL4</accession>
<sequence length="465" mass="53330">MAFNDDNFMLKNEAAKRLYQQIKDQPIFDYHCHLDPKEIFEDKVYDNIVDLWLGGDHYKWRLMRANGISEEEITGSASKLDKFKAFARTLQRSYGNPVYHWSVMELKNVFGVCELLTEDNAEEIYHRINAYLVEHQISPRKLIADSLVRFIGTTDHPLDDLAWHKRLAADDTFETVVAPTFRPDEAFIEHQCFADFVARLAQATGRTITDFKSFIAAMEERIAYFAENGCKASDISFTEIVFEAAEPEQLDHLMTRVLEGYQPQPLEIKQWQTAVFAELCRVYKHYGFVTQVHFGALRNNHSAIFNKLGADVGVDSLGDQAALAINMNRLLDHLVQRDSLPKMIWYNLNPSYNITVANTLANFQANENGIAGYLQFGAGWWFADTKLGMISQMNALAEQGLLANFVGMLTDSRSFLSYQRHDYFRRILSTYLGEWIEEGEVPEDYQALGSMAKDIAYNNAIQYFS</sequence>
<proteinExistence type="inferred from homology"/>
<comment type="catalytic activity">
    <reaction evidence="1">
        <text>D-glucuronate = D-fructuronate</text>
        <dbReference type="Rhea" id="RHEA:13049"/>
        <dbReference type="ChEBI" id="CHEBI:58720"/>
        <dbReference type="ChEBI" id="CHEBI:59863"/>
        <dbReference type="EC" id="5.3.1.12"/>
    </reaction>
</comment>
<comment type="catalytic activity">
    <reaction evidence="1">
        <text>aldehydo-D-galacturonate = keto-D-tagaturonate</text>
        <dbReference type="Rhea" id="RHEA:27702"/>
        <dbReference type="ChEBI" id="CHEBI:12952"/>
        <dbReference type="ChEBI" id="CHEBI:17886"/>
        <dbReference type="EC" id="5.3.1.12"/>
    </reaction>
</comment>
<comment type="pathway">
    <text evidence="1">Carbohydrate metabolism; pentose and glucuronate interconversion.</text>
</comment>
<comment type="similarity">
    <text evidence="1">Belongs to the metallo-dependent hydrolases superfamily. Uronate isomerase family.</text>
</comment>
<feature type="chain" id="PRO_1000212520" description="Uronate isomerase">
    <location>
        <begin position="1"/>
        <end position="465"/>
    </location>
</feature>